<gene>
    <name type="ordered locus">MT1774.1</name>
</gene>
<name>Y1734_MYCTO</name>
<sequence length="80" mass="8315">MTNVGDQGVDAVFGVIYPPQVALVSFGKPAQRVCAVDGAIHVMTTVLATLPADHGCSDDHRGALFFLSINELTRCAAVTG</sequence>
<evidence type="ECO:0000269" key="1">
    <source>
    </source>
</evidence>
<evidence type="ECO:0000305" key="2"/>
<proteinExistence type="evidence at transcript level"/>
<comment type="induction">
    <text evidence="1">A member of the dormancy regulon. Induced in response to reduced oxygen tension (hypoxia) and low levels of nitric oxide (NO).</text>
</comment>
<comment type="similarity">
    <text evidence="2">Belongs to the 2-oxoacid dehydrogenase family.</text>
</comment>
<protein>
    <recommendedName>
        <fullName>Uncharacterized protein MT1774.1</fullName>
    </recommendedName>
</protein>
<dbReference type="EMBL" id="AE000516">
    <property type="status" value="NOT_ANNOTATED_CDS"/>
    <property type="molecule type" value="Genomic_DNA"/>
</dbReference>
<dbReference type="PIR" id="A70688">
    <property type="entry name" value="A70688"/>
</dbReference>
<dbReference type="RefSeq" id="WP_003408509.1">
    <property type="nucleotide sequence ID" value="NZ_KK341227.1"/>
</dbReference>
<dbReference type="SMR" id="P9WLS6"/>
<dbReference type="PATRIC" id="fig|83331.31.peg.1904"/>
<dbReference type="Proteomes" id="UP000001020">
    <property type="component" value="Chromosome"/>
</dbReference>
<dbReference type="GO" id="GO:0016746">
    <property type="term" value="F:acyltransferase activity"/>
    <property type="evidence" value="ECO:0007669"/>
    <property type="project" value="InterPro"/>
</dbReference>
<dbReference type="Gene3D" id="3.30.559.10">
    <property type="entry name" value="Chloramphenicol acetyltransferase-like domain"/>
    <property type="match status" value="1"/>
</dbReference>
<dbReference type="InterPro" id="IPR001078">
    <property type="entry name" value="2-oxoacid_DH_actylTfrase"/>
</dbReference>
<dbReference type="InterPro" id="IPR023213">
    <property type="entry name" value="CAT-like_dom_sf"/>
</dbReference>
<dbReference type="Pfam" id="PF00198">
    <property type="entry name" value="2-oxoacid_dh"/>
    <property type="match status" value="1"/>
</dbReference>
<dbReference type="SUPFAM" id="SSF52777">
    <property type="entry name" value="CoA-dependent acyltransferases"/>
    <property type="match status" value="1"/>
</dbReference>
<reference key="1">
    <citation type="journal article" date="2002" name="J. Bacteriol.">
        <title>Whole-genome comparison of Mycobacterium tuberculosis clinical and laboratory strains.</title>
        <authorList>
            <person name="Fleischmann R.D."/>
            <person name="Alland D."/>
            <person name="Eisen J.A."/>
            <person name="Carpenter L."/>
            <person name="White O."/>
            <person name="Peterson J.D."/>
            <person name="DeBoy R.T."/>
            <person name="Dodson R.J."/>
            <person name="Gwinn M.L."/>
            <person name="Haft D.H."/>
            <person name="Hickey E.K."/>
            <person name="Kolonay J.F."/>
            <person name="Nelson W.C."/>
            <person name="Umayam L.A."/>
            <person name="Ermolaeva M.D."/>
            <person name="Salzberg S.L."/>
            <person name="Delcher A."/>
            <person name="Utterback T.R."/>
            <person name="Weidman J.F."/>
            <person name="Khouri H.M."/>
            <person name="Gill J."/>
            <person name="Mikula A."/>
            <person name="Bishai W."/>
            <person name="Jacobs W.R. Jr."/>
            <person name="Venter J.C."/>
            <person name="Fraser C.M."/>
        </authorList>
    </citation>
    <scope>NUCLEOTIDE SEQUENCE [LARGE SCALE GENOMIC DNA]</scope>
    <source>
        <strain>CDC 1551 / Oshkosh</strain>
    </source>
</reference>
<reference key="2">
    <citation type="journal article" date="2003" name="J. Exp. Med.">
        <title>Inhibition of respiration by nitric oxide induces a Mycobacterium tuberculosis dormancy program.</title>
        <authorList>
            <person name="Voskuil M.I."/>
            <person name="Schnappinger D."/>
            <person name="Visconti K.C."/>
            <person name="Harrell M.I."/>
            <person name="Dolganov G.M."/>
            <person name="Sherman D.R."/>
            <person name="Schoolnik G.K."/>
        </authorList>
    </citation>
    <scope>INDUCTION BY NITRIC OXIDE (NO) AND BY HYPOXIA</scope>
    <scope>DORMANCY REGULON</scope>
    <source>
        <strain>CDC 1551 / Oshkosh</strain>
    </source>
</reference>
<feature type="chain" id="PRO_0000427427" description="Uncharacterized protein MT1774.1">
    <location>
        <begin position="1"/>
        <end position="80"/>
    </location>
</feature>
<organism>
    <name type="scientific">Mycobacterium tuberculosis (strain CDC 1551 / Oshkosh)</name>
    <dbReference type="NCBI Taxonomy" id="83331"/>
    <lineage>
        <taxon>Bacteria</taxon>
        <taxon>Bacillati</taxon>
        <taxon>Actinomycetota</taxon>
        <taxon>Actinomycetes</taxon>
        <taxon>Mycobacteriales</taxon>
        <taxon>Mycobacteriaceae</taxon>
        <taxon>Mycobacterium</taxon>
        <taxon>Mycobacterium tuberculosis complex</taxon>
    </lineage>
</organism>
<keyword id="KW-1185">Reference proteome</keyword>
<accession>P9WLS6</accession>
<accession>L0T942</accession>
<accession>P71992</accession>